<dbReference type="EC" id="5.6.1.7" evidence="1"/>
<dbReference type="EMBL" id="CP000113">
    <property type="protein sequence ID" value="ABF91085.1"/>
    <property type="molecule type" value="Genomic_DNA"/>
</dbReference>
<dbReference type="SMR" id="Q1D2S1"/>
<dbReference type="STRING" id="246197.MXAN_4895"/>
<dbReference type="EnsemblBacteria" id="ABF91085">
    <property type="protein sequence ID" value="ABF91085"/>
    <property type="gene ID" value="MXAN_4895"/>
</dbReference>
<dbReference type="GeneID" id="41362185"/>
<dbReference type="KEGG" id="mxa:MXAN_4895"/>
<dbReference type="eggNOG" id="COG0459">
    <property type="taxonomic scope" value="Bacteria"/>
</dbReference>
<dbReference type="HOGENOM" id="CLU_016503_3_0_7"/>
<dbReference type="OrthoDB" id="9766614at2"/>
<dbReference type="Proteomes" id="UP000002402">
    <property type="component" value="Chromosome"/>
</dbReference>
<dbReference type="GO" id="GO:0005737">
    <property type="term" value="C:cytoplasm"/>
    <property type="evidence" value="ECO:0007669"/>
    <property type="project" value="UniProtKB-SubCell"/>
</dbReference>
<dbReference type="GO" id="GO:0005524">
    <property type="term" value="F:ATP binding"/>
    <property type="evidence" value="ECO:0007669"/>
    <property type="project" value="UniProtKB-UniRule"/>
</dbReference>
<dbReference type="GO" id="GO:0140662">
    <property type="term" value="F:ATP-dependent protein folding chaperone"/>
    <property type="evidence" value="ECO:0007669"/>
    <property type="project" value="InterPro"/>
</dbReference>
<dbReference type="GO" id="GO:0016853">
    <property type="term" value="F:isomerase activity"/>
    <property type="evidence" value="ECO:0007669"/>
    <property type="project" value="UniProtKB-KW"/>
</dbReference>
<dbReference type="GO" id="GO:0051082">
    <property type="term" value="F:unfolded protein binding"/>
    <property type="evidence" value="ECO:0007669"/>
    <property type="project" value="UniProtKB-UniRule"/>
</dbReference>
<dbReference type="GO" id="GO:0042026">
    <property type="term" value="P:protein refolding"/>
    <property type="evidence" value="ECO:0007669"/>
    <property type="project" value="UniProtKB-UniRule"/>
</dbReference>
<dbReference type="CDD" id="cd03344">
    <property type="entry name" value="GroEL"/>
    <property type="match status" value="1"/>
</dbReference>
<dbReference type="FunFam" id="1.10.560.10:FF:000001">
    <property type="entry name" value="60 kDa chaperonin"/>
    <property type="match status" value="1"/>
</dbReference>
<dbReference type="FunFam" id="3.50.7.10:FF:000001">
    <property type="entry name" value="60 kDa chaperonin"/>
    <property type="match status" value="1"/>
</dbReference>
<dbReference type="Gene3D" id="3.50.7.10">
    <property type="entry name" value="GroEL"/>
    <property type="match status" value="1"/>
</dbReference>
<dbReference type="Gene3D" id="1.10.560.10">
    <property type="entry name" value="GroEL-like equatorial domain"/>
    <property type="match status" value="1"/>
</dbReference>
<dbReference type="Gene3D" id="3.30.260.10">
    <property type="entry name" value="TCP-1-like chaperonin intermediate domain"/>
    <property type="match status" value="1"/>
</dbReference>
<dbReference type="HAMAP" id="MF_00600">
    <property type="entry name" value="CH60"/>
    <property type="match status" value="1"/>
</dbReference>
<dbReference type="InterPro" id="IPR018370">
    <property type="entry name" value="Chaperonin_Cpn60_CS"/>
</dbReference>
<dbReference type="InterPro" id="IPR001844">
    <property type="entry name" value="Cpn60/GroEL"/>
</dbReference>
<dbReference type="InterPro" id="IPR002423">
    <property type="entry name" value="Cpn60/GroEL/TCP-1"/>
</dbReference>
<dbReference type="InterPro" id="IPR027409">
    <property type="entry name" value="GroEL-like_apical_dom_sf"/>
</dbReference>
<dbReference type="InterPro" id="IPR027413">
    <property type="entry name" value="GROEL-like_equatorial_sf"/>
</dbReference>
<dbReference type="InterPro" id="IPR027410">
    <property type="entry name" value="TCP-1-like_intermed_sf"/>
</dbReference>
<dbReference type="NCBIfam" id="TIGR02348">
    <property type="entry name" value="GroEL"/>
    <property type="match status" value="1"/>
</dbReference>
<dbReference type="NCBIfam" id="NF000592">
    <property type="entry name" value="PRK00013.1"/>
    <property type="match status" value="1"/>
</dbReference>
<dbReference type="NCBIfam" id="NF009487">
    <property type="entry name" value="PRK12849.1"/>
    <property type="match status" value="1"/>
</dbReference>
<dbReference type="NCBIfam" id="NF009488">
    <property type="entry name" value="PRK12850.1"/>
    <property type="match status" value="1"/>
</dbReference>
<dbReference type="NCBIfam" id="NF009489">
    <property type="entry name" value="PRK12851.1"/>
    <property type="match status" value="1"/>
</dbReference>
<dbReference type="PANTHER" id="PTHR45633">
    <property type="entry name" value="60 KDA HEAT SHOCK PROTEIN, MITOCHONDRIAL"/>
    <property type="match status" value="1"/>
</dbReference>
<dbReference type="Pfam" id="PF00118">
    <property type="entry name" value="Cpn60_TCP1"/>
    <property type="match status" value="1"/>
</dbReference>
<dbReference type="PRINTS" id="PR00298">
    <property type="entry name" value="CHAPERONIN60"/>
</dbReference>
<dbReference type="SUPFAM" id="SSF52029">
    <property type="entry name" value="GroEL apical domain-like"/>
    <property type="match status" value="1"/>
</dbReference>
<dbReference type="SUPFAM" id="SSF48592">
    <property type="entry name" value="GroEL equatorial domain-like"/>
    <property type="match status" value="1"/>
</dbReference>
<dbReference type="SUPFAM" id="SSF54849">
    <property type="entry name" value="GroEL-intermediate domain like"/>
    <property type="match status" value="1"/>
</dbReference>
<dbReference type="PROSITE" id="PS00296">
    <property type="entry name" value="CHAPERONINS_CPN60"/>
    <property type="match status" value="1"/>
</dbReference>
<reference key="1">
    <citation type="journal article" date="2006" name="Proc. Natl. Acad. Sci. U.S.A.">
        <title>Evolution of sensory complexity recorded in a myxobacterial genome.</title>
        <authorList>
            <person name="Goldman B.S."/>
            <person name="Nierman W.C."/>
            <person name="Kaiser D."/>
            <person name="Slater S.C."/>
            <person name="Durkin A.S."/>
            <person name="Eisen J.A."/>
            <person name="Ronning C.M."/>
            <person name="Barbazuk W.B."/>
            <person name="Blanchard M."/>
            <person name="Field C."/>
            <person name="Halling C."/>
            <person name="Hinkle G."/>
            <person name="Iartchuk O."/>
            <person name="Kim H.S."/>
            <person name="Mackenzie C."/>
            <person name="Madupu R."/>
            <person name="Miller N."/>
            <person name="Shvartsbeyn A."/>
            <person name="Sullivan S.A."/>
            <person name="Vaudin M."/>
            <person name="Wiegand R."/>
            <person name="Kaplan H.B."/>
        </authorList>
    </citation>
    <scope>NUCLEOTIDE SEQUENCE [LARGE SCALE GENOMIC DNA]</scope>
    <source>
        <strain>DK1622</strain>
    </source>
</reference>
<organism>
    <name type="scientific">Myxococcus xanthus (strain DK1622)</name>
    <dbReference type="NCBI Taxonomy" id="246197"/>
    <lineage>
        <taxon>Bacteria</taxon>
        <taxon>Pseudomonadati</taxon>
        <taxon>Myxococcota</taxon>
        <taxon>Myxococcia</taxon>
        <taxon>Myxococcales</taxon>
        <taxon>Cystobacterineae</taxon>
        <taxon>Myxococcaceae</taxon>
        <taxon>Myxococcus</taxon>
    </lineage>
</organism>
<keyword id="KW-0067">ATP-binding</keyword>
<keyword id="KW-0143">Chaperone</keyword>
<keyword id="KW-0963">Cytoplasm</keyword>
<keyword id="KW-0413">Isomerase</keyword>
<keyword id="KW-0547">Nucleotide-binding</keyword>
<keyword id="KW-1185">Reference proteome</keyword>
<comment type="function">
    <text evidence="1">Together with its co-chaperonin GroES, plays an essential role in assisting protein folding. The GroEL-GroES system forms a nano-cage that allows encapsulation of the non-native substrate proteins and provides a physical environment optimized to promote and accelerate protein folding.</text>
</comment>
<comment type="catalytic activity">
    <reaction evidence="1">
        <text>ATP + H2O + a folded polypeptide = ADP + phosphate + an unfolded polypeptide.</text>
        <dbReference type="EC" id="5.6.1.7"/>
    </reaction>
</comment>
<comment type="subunit">
    <text evidence="1">Forms a cylinder of 14 subunits composed of two heptameric rings stacked back-to-back. Interacts with the co-chaperonin GroES.</text>
</comment>
<comment type="subcellular location">
    <subcellularLocation>
        <location evidence="1">Cytoplasm</location>
    </subcellularLocation>
</comment>
<comment type="similarity">
    <text evidence="1">Belongs to the chaperonin (HSP60) family.</text>
</comment>
<proteinExistence type="inferred from homology"/>
<gene>
    <name evidence="1" type="primary">groEL2</name>
    <name evidence="1" type="synonym">groL2</name>
    <name type="ordered locus">MXAN_4895</name>
</gene>
<feature type="chain" id="PRO_0000256931" description="Chaperonin GroEL 2">
    <location>
        <begin position="1"/>
        <end position="549"/>
    </location>
</feature>
<feature type="binding site" evidence="1">
    <location>
        <begin position="29"/>
        <end position="32"/>
    </location>
    <ligand>
        <name>ATP</name>
        <dbReference type="ChEBI" id="CHEBI:30616"/>
    </ligand>
</feature>
<feature type="binding site" evidence="1">
    <location>
        <position position="50"/>
    </location>
    <ligand>
        <name>ATP</name>
        <dbReference type="ChEBI" id="CHEBI:30616"/>
    </ligand>
</feature>
<feature type="binding site" evidence="1">
    <location>
        <begin position="86"/>
        <end position="90"/>
    </location>
    <ligand>
        <name>ATP</name>
        <dbReference type="ChEBI" id="CHEBI:30616"/>
    </ligand>
</feature>
<feature type="binding site" evidence="1">
    <location>
        <position position="414"/>
    </location>
    <ligand>
        <name>ATP</name>
        <dbReference type="ChEBI" id="CHEBI:30616"/>
    </ligand>
</feature>
<feature type="binding site" evidence="1">
    <location>
        <begin position="477"/>
        <end position="479"/>
    </location>
    <ligand>
        <name>ATP</name>
        <dbReference type="ChEBI" id="CHEBI:30616"/>
    </ligand>
</feature>
<feature type="binding site" evidence="1">
    <location>
        <position position="493"/>
    </location>
    <ligand>
        <name>ATP</name>
        <dbReference type="ChEBI" id="CHEBI:30616"/>
    </ligand>
</feature>
<name>CH602_MYXXD</name>
<accession>Q1D2S1</accession>
<sequence>MAKDILFDVRAREAILRGVNILADAVKVTLGPKGRNVVIEKSFGSPTITKDGVTVAKEIELENKFENMGAQMVKEVASKTSDVAGDGTTTATVLAQAIFREGAKLVAAGHNPMDIKRGIDKAVGAIVAELKKLAKPTKDKKEIAQVGTISANGDETIGTIIADAMEKVGKEGVITVEEAKGLETTLDVVEGMQFDRGYLSPYFVTDPERMEAALNDALILINEKKISSMKDLLPILEQVARAGKPLLIIAEDIEGEALATLVVNKIRGVLNVCAVKAPGFGDRRKAMLEDIATLTGGRMIAEDLGIKLDTITLQDLGRAKRITVDKDNTTIVDGAGGQQEIEARVKQIRAQIEETSSDYDREKLQERLAKLVGGVAVINVGAATETEMKEKKARVEDALNATRAAVEEGVVPGGGVAYIRCLKALDGLQLSGGEKFGVDIIRRAVEEPLRQIVGNGGLEGSVVVNKVKESSGPFGFNAATGTYEDLLAAGVIDPAKVSRTALQNAASVSSLMLTTEAMVAERPKEEKDLPAGGGMGGMGGMGGMGGMGM</sequence>
<evidence type="ECO:0000255" key="1">
    <source>
        <dbReference type="HAMAP-Rule" id="MF_00600"/>
    </source>
</evidence>
<protein>
    <recommendedName>
        <fullName evidence="1">Chaperonin GroEL 2</fullName>
        <ecNumber evidence="1">5.6.1.7</ecNumber>
    </recommendedName>
    <alternativeName>
        <fullName evidence="1">60 kDa chaperonin 2</fullName>
    </alternativeName>
    <alternativeName>
        <fullName evidence="1">Chaperonin-60 2</fullName>
        <shortName evidence="1">Cpn60 2</shortName>
    </alternativeName>
</protein>